<gene>
    <name type="primary">SIFV0009</name>
</gene>
<dbReference type="EMBL" id="AF440571">
    <property type="protein sequence ID" value="AAL27720.1"/>
    <property type="molecule type" value="Genomic_DNA"/>
</dbReference>
<dbReference type="RefSeq" id="NP_445674.1">
    <property type="nucleotide sequence ID" value="NC_003214.2"/>
</dbReference>
<dbReference type="SMR" id="Q914M1"/>
<dbReference type="GeneID" id="922289"/>
<dbReference type="KEGG" id="vg:922289"/>
<dbReference type="Proteomes" id="UP000007017">
    <property type="component" value="Segment"/>
</dbReference>
<name>Y009_SIFVH</name>
<protein>
    <recommendedName>
        <fullName>Uncharacterized protein 9</fullName>
    </recommendedName>
</protein>
<sequence>MEVILEIPNVLHEEKHCEDFLDCVEIYMKYLTKYGKQLGICYGQNSLKKFPISGEFRNECENGYVEIVK</sequence>
<reference key="1">
    <citation type="journal article" date="2000" name="Virology">
        <title>A novel lipothrixvirus, SIFV, of the extremely thermophilic crenarchaeon Sulfolobus.</title>
        <authorList>
            <person name="Arnold H.P."/>
            <person name="Zillig W."/>
            <person name="Ziese U."/>
            <person name="Holz I."/>
            <person name="Crosby M."/>
            <person name="Utterback T."/>
            <person name="Weidmann J.F."/>
            <person name="Umayam L.A."/>
            <person name="Teffera K."/>
            <person name="Kristjanson J.K."/>
            <person name="Klenk H.P."/>
            <person name="Nelson K.E."/>
            <person name="Fraser C.M."/>
        </authorList>
    </citation>
    <scope>NUCLEOTIDE SEQUENCE [GENOMIC DNA]</scope>
</reference>
<organismHost>
    <name type="scientific">Saccharolobus islandicus</name>
    <name type="common">Sulfolobus islandicus</name>
    <dbReference type="NCBI Taxonomy" id="43080"/>
</organismHost>
<organism>
    <name type="scientific">Sulfolobus islandicus filamentous virus (isolate Iceland/Hveragerdi)</name>
    <name type="common">SIFV</name>
    <dbReference type="NCBI Taxonomy" id="654908"/>
    <lineage>
        <taxon>Viruses</taxon>
        <taxon>Adnaviria</taxon>
        <taxon>Zilligvirae</taxon>
        <taxon>Taleaviricota</taxon>
        <taxon>Tokiviricetes</taxon>
        <taxon>Ligamenvirales</taxon>
        <taxon>Lipothrixviridae</taxon>
        <taxon>Betalipothrixvirus</taxon>
        <taxon>Sulfolobus islandicus filamentous virus</taxon>
    </lineage>
</organism>
<feature type="chain" id="PRO_0000385419" description="Uncharacterized protein 9">
    <location>
        <begin position="1"/>
        <end position="69"/>
    </location>
</feature>
<proteinExistence type="predicted"/>
<keyword id="KW-1185">Reference proteome</keyword>
<accession>Q914M1</accession>